<keyword id="KW-0067">ATP-binding</keyword>
<keyword id="KW-0315">Glutamine amidotransferase</keyword>
<keyword id="KW-0436">Ligase</keyword>
<keyword id="KW-0460">Magnesium</keyword>
<keyword id="KW-0479">Metal-binding</keyword>
<keyword id="KW-0547">Nucleotide-binding</keyword>
<keyword id="KW-0665">Pyrimidine biosynthesis</keyword>
<keyword id="KW-1185">Reference proteome</keyword>
<comment type="function">
    <text evidence="1">Catalyzes the ATP-dependent amination of UTP to CTP with either L-glutamine or ammonia as the source of nitrogen. Regulates intracellular CTP levels through interactions with the four ribonucleotide triphosphates.</text>
</comment>
<comment type="catalytic activity">
    <reaction evidence="1">
        <text>UTP + L-glutamine + ATP + H2O = CTP + L-glutamate + ADP + phosphate + 2 H(+)</text>
        <dbReference type="Rhea" id="RHEA:26426"/>
        <dbReference type="ChEBI" id="CHEBI:15377"/>
        <dbReference type="ChEBI" id="CHEBI:15378"/>
        <dbReference type="ChEBI" id="CHEBI:29985"/>
        <dbReference type="ChEBI" id="CHEBI:30616"/>
        <dbReference type="ChEBI" id="CHEBI:37563"/>
        <dbReference type="ChEBI" id="CHEBI:43474"/>
        <dbReference type="ChEBI" id="CHEBI:46398"/>
        <dbReference type="ChEBI" id="CHEBI:58359"/>
        <dbReference type="ChEBI" id="CHEBI:456216"/>
        <dbReference type="EC" id="6.3.4.2"/>
    </reaction>
</comment>
<comment type="catalytic activity">
    <reaction evidence="1">
        <text>L-glutamine + H2O = L-glutamate + NH4(+)</text>
        <dbReference type="Rhea" id="RHEA:15889"/>
        <dbReference type="ChEBI" id="CHEBI:15377"/>
        <dbReference type="ChEBI" id="CHEBI:28938"/>
        <dbReference type="ChEBI" id="CHEBI:29985"/>
        <dbReference type="ChEBI" id="CHEBI:58359"/>
    </reaction>
</comment>
<comment type="catalytic activity">
    <reaction evidence="1">
        <text>UTP + NH4(+) + ATP = CTP + ADP + phosphate + 2 H(+)</text>
        <dbReference type="Rhea" id="RHEA:16597"/>
        <dbReference type="ChEBI" id="CHEBI:15378"/>
        <dbReference type="ChEBI" id="CHEBI:28938"/>
        <dbReference type="ChEBI" id="CHEBI:30616"/>
        <dbReference type="ChEBI" id="CHEBI:37563"/>
        <dbReference type="ChEBI" id="CHEBI:43474"/>
        <dbReference type="ChEBI" id="CHEBI:46398"/>
        <dbReference type="ChEBI" id="CHEBI:456216"/>
    </reaction>
</comment>
<comment type="activity regulation">
    <text evidence="1">Allosterically activated by GTP, when glutamine is the substrate; GTP has no effect on the reaction when ammonia is the substrate. The allosteric effector GTP functions by stabilizing the protein conformation that binds the tetrahedral intermediate(s) formed during glutamine hydrolysis. Inhibited by the product CTP, via allosteric rather than competitive inhibition.</text>
</comment>
<comment type="pathway">
    <text evidence="1">Pyrimidine metabolism; CTP biosynthesis via de novo pathway; CTP from UDP: step 2/2.</text>
</comment>
<comment type="subunit">
    <text evidence="1">Homotetramer.</text>
</comment>
<comment type="miscellaneous">
    <text evidence="1">CTPSs have evolved a hybrid strategy for distinguishing between UTP and CTP. The overlapping regions of the product feedback inhibitory and substrate sites recognize a common feature in both compounds, the triphosphate moiety. To differentiate isosteric substrate and product pyrimidine rings, an additional pocket far from the expected kinase/ligase catalytic site, specifically recognizes the cytosine and ribose portions of the product inhibitor.</text>
</comment>
<comment type="similarity">
    <text evidence="1">Belongs to the CTP synthase family.</text>
</comment>
<dbReference type="EC" id="6.3.4.2" evidence="1"/>
<dbReference type="EMBL" id="CR954253">
    <property type="protein sequence ID" value="CAI97192.1"/>
    <property type="molecule type" value="Genomic_DNA"/>
</dbReference>
<dbReference type="RefSeq" id="WP_011543626.1">
    <property type="nucleotide sequence ID" value="NC_008054.1"/>
</dbReference>
<dbReference type="SMR" id="Q1GBQ2"/>
<dbReference type="STRING" id="390333.Ldb0354"/>
<dbReference type="KEGG" id="ldb:Ldb0354"/>
<dbReference type="PATRIC" id="fig|390333.13.peg.434"/>
<dbReference type="eggNOG" id="COG0504">
    <property type="taxonomic scope" value="Bacteria"/>
</dbReference>
<dbReference type="HOGENOM" id="CLU_011675_5_0_9"/>
<dbReference type="BioCyc" id="LDEL390333:LDB_RS01485-MONOMER"/>
<dbReference type="UniPathway" id="UPA00159">
    <property type="reaction ID" value="UER00277"/>
</dbReference>
<dbReference type="Proteomes" id="UP000001259">
    <property type="component" value="Chromosome"/>
</dbReference>
<dbReference type="GO" id="GO:0005829">
    <property type="term" value="C:cytosol"/>
    <property type="evidence" value="ECO:0007669"/>
    <property type="project" value="TreeGrafter"/>
</dbReference>
<dbReference type="GO" id="GO:0005524">
    <property type="term" value="F:ATP binding"/>
    <property type="evidence" value="ECO:0007669"/>
    <property type="project" value="UniProtKB-KW"/>
</dbReference>
<dbReference type="GO" id="GO:0003883">
    <property type="term" value="F:CTP synthase activity"/>
    <property type="evidence" value="ECO:0007669"/>
    <property type="project" value="UniProtKB-UniRule"/>
</dbReference>
<dbReference type="GO" id="GO:0004359">
    <property type="term" value="F:glutaminase activity"/>
    <property type="evidence" value="ECO:0007669"/>
    <property type="project" value="RHEA"/>
</dbReference>
<dbReference type="GO" id="GO:0042802">
    <property type="term" value="F:identical protein binding"/>
    <property type="evidence" value="ECO:0007669"/>
    <property type="project" value="TreeGrafter"/>
</dbReference>
<dbReference type="GO" id="GO:0046872">
    <property type="term" value="F:metal ion binding"/>
    <property type="evidence" value="ECO:0007669"/>
    <property type="project" value="UniProtKB-KW"/>
</dbReference>
<dbReference type="GO" id="GO:0044210">
    <property type="term" value="P:'de novo' CTP biosynthetic process"/>
    <property type="evidence" value="ECO:0007669"/>
    <property type="project" value="UniProtKB-UniRule"/>
</dbReference>
<dbReference type="GO" id="GO:0019856">
    <property type="term" value="P:pyrimidine nucleobase biosynthetic process"/>
    <property type="evidence" value="ECO:0007669"/>
    <property type="project" value="TreeGrafter"/>
</dbReference>
<dbReference type="CDD" id="cd03113">
    <property type="entry name" value="CTPS_N"/>
    <property type="match status" value="1"/>
</dbReference>
<dbReference type="CDD" id="cd01746">
    <property type="entry name" value="GATase1_CTP_Synthase"/>
    <property type="match status" value="1"/>
</dbReference>
<dbReference type="FunFam" id="3.40.50.300:FF:000009">
    <property type="entry name" value="CTP synthase"/>
    <property type="match status" value="1"/>
</dbReference>
<dbReference type="FunFam" id="3.40.50.880:FF:000002">
    <property type="entry name" value="CTP synthase"/>
    <property type="match status" value="1"/>
</dbReference>
<dbReference type="Gene3D" id="3.40.50.880">
    <property type="match status" value="1"/>
</dbReference>
<dbReference type="Gene3D" id="3.40.50.300">
    <property type="entry name" value="P-loop containing nucleotide triphosphate hydrolases"/>
    <property type="match status" value="1"/>
</dbReference>
<dbReference type="HAMAP" id="MF_01227">
    <property type="entry name" value="PyrG"/>
    <property type="match status" value="1"/>
</dbReference>
<dbReference type="InterPro" id="IPR029062">
    <property type="entry name" value="Class_I_gatase-like"/>
</dbReference>
<dbReference type="InterPro" id="IPR004468">
    <property type="entry name" value="CTP_synthase"/>
</dbReference>
<dbReference type="InterPro" id="IPR017456">
    <property type="entry name" value="CTP_synthase_N"/>
</dbReference>
<dbReference type="InterPro" id="IPR017926">
    <property type="entry name" value="GATASE"/>
</dbReference>
<dbReference type="InterPro" id="IPR033828">
    <property type="entry name" value="GATase1_CTP_Synthase"/>
</dbReference>
<dbReference type="InterPro" id="IPR027417">
    <property type="entry name" value="P-loop_NTPase"/>
</dbReference>
<dbReference type="NCBIfam" id="NF003792">
    <property type="entry name" value="PRK05380.1"/>
    <property type="match status" value="1"/>
</dbReference>
<dbReference type="NCBIfam" id="TIGR00337">
    <property type="entry name" value="PyrG"/>
    <property type="match status" value="1"/>
</dbReference>
<dbReference type="PANTHER" id="PTHR11550">
    <property type="entry name" value="CTP SYNTHASE"/>
    <property type="match status" value="1"/>
</dbReference>
<dbReference type="PANTHER" id="PTHR11550:SF0">
    <property type="entry name" value="CTP SYNTHASE-RELATED"/>
    <property type="match status" value="1"/>
</dbReference>
<dbReference type="Pfam" id="PF06418">
    <property type="entry name" value="CTP_synth_N"/>
    <property type="match status" value="1"/>
</dbReference>
<dbReference type="Pfam" id="PF00117">
    <property type="entry name" value="GATase"/>
    <property type="match status" value="1"/>
</dbReference>
<dbReference type="SUPFAM" id="SSF52317">
    <property type="entry name" value="Class I glutamine amidotransferase-like"/>
    <property type="match status" value="1"/>
</dbReference>
<dbReference type="SUPFAM" id="SSF52540">
    <property type="entry name" value="P-loop containing nucleoside triphosphate hydrolases"/>
    <property type="match status" value="1"/>
</dbReference>
<dbReference type="PROSITE" id="PS51273">
    <property type="entry name" value="GATASE_TYPE_1"/>
    <property type="match status" value="1"/>
</dbReference>
<gene>
    <name evidence="1" type="primary">pyrG</name>
    <name type="ordered locus">Ldb0354</name>
</gene>
<proteinExistence type="inferred from homology"/>
<name>PYRG_LACDA</name>
<evidence type="ECO:0000255" key="1">
    <source>
        <dbReference type="HAMAP-Rule" id="MF_01227"/>
    </source>
</evidence>
<organism>
    <name type="scientific">Lactobacillus delbrueckii subsp. bulgaricus (strain ATCC 11842 / DSM 20081 / BCRC 10696 / JCM 1002 / NBRC 13953 / NCIMB 11778 / NCTC 12712 / WDCM 00102 / Lb 14)</name>
    <dbReference type="NCBI Taxonomy" id="390333"/>
    <lineage>
        <taxon>Bacteria</taxon>
        <taxon>Bacillati</taxon>
        <taxon>Bacillota</taxon>
        <taxon>Bacilli</taxon>
        <taxon>Lactobacillales</taxon>
        <taxon>Lactobacillaceae</taxon>
        <taxon>Lactobacillus</taxon>
    </lineage>
</organism>
<protein>
    <recommendedName>
        <fullName evidence="1">CTP synthase</fullName>
        <ecNumber evidence="1">6.3.4.2</ecNumber>
    </recommendedName>
    <alternativeName>
        <fullName evidence="1">Cytidine 5'-triphosphate synthase</fullName>
    </alternativeName>
    <alternativeName>
        <fullName evidence="1">Cytidine triphosphate synthetase</fullName>
        <shortName evidence="1">CTP synthetase</shortName>
        <shortName evidence="1">CTPS</shortName>
    </alternativeName>
    <alternativeName>
        <fullName evidence="1">UTP--ammonia ligase</fullName>
    </alternativeName>
</protein>
<reference key="1">
    <citation type="journal article" date="2006" name="Proc. Natl. Acad. Sci. U.S.A.">
        <title>The complete genome sequence of Lactobacillus bulgaricus reveals extensive and ongoing reductive evolution.</title>
        <authorList>
            <person name="van de Guchte M."/>
            <person name="Penaud S."/>
            <person name="Grimaldi C."/>
            <person name="Barbe V."/>
            <person name="Bryson K."/>
            <person name="Nicolas P."/>
            <person name="Robert C."/>
            <person name="Oztas S."/>
            <person name="Mangenot S."/>
            <person name="Couloux A."/>
            <person name="Loux V."/>
            <person name="Dervyn R."/>
            <person name="Bossy R."/>
            <person name="Bolotin A."/>
            <person name="Batto J.-M."/>
            <person name="Walunas T."/>
            <person name="Gibrat J.-F."/>
            <person name="Bessieres P."/>
            <person name="Weissenbach J."/>
            <person name="Ehrlich S.D."/>
            <person name="Maguin E."/>
        </authorList>
    </citation>
    <scope>NUCLEOTIDE SEQUENCE [LARGE SCALE GENOMIC DNA]</scope>
    <source>
        <strain>ATCC 11842 / DSM 20081 / BCRC 10696 / JCM 1002 / NBRC 13953 / NCIMB 11778 / NCTC 12712 / WDCM 00102 / Lb 14</strain>
    </source>
</reference>
<accession>Q1GBQ2</accession>
<feature type="chain" id="PRO_0000266139" description="CTP synthase">
    <location>
        <begin position="1"/>
        <end position="539"/>
    </location>
</feature>
<feature type="domain" description="Glutamine amidotransferase type-1" evidence="1">
    <location>
        <begin position="294"/>
        <end position="537"/>
    </location>
</feature>
<feature type="region of interest" description="Amidoligase domain" evidence="1">
    <location>
        <begin position="1"/>
        <end position="267"/>
    </location>
</feature>
<feature type="active site" description="Nucleophile; for glutamine hydrolysis" evidence="1">
    <location>
        <position position="383"/>
    </location>
</feature>
<feature type="active site" evidence="1">
    <location>
        <position position="510"/>
    </location>
</feature>
<feature type="active site" evidence="1">
    <location>
        <position position="512"/>
    </location>
</feature>
<feature type="binding site" evidence="1">
    <location>
        <position position="13"/>
    </location>
    <ligand>
        <name>CTP</name>
        <dbReference type="ChEBI" id="CHEBI:37563"/>
        <note>allosteric inhibitor</note>
    </ligand>
</feature>
<feature type="binding site" evidence="1">
    <location>
        <position position="13"/>
    </location>
    <ligand>
        <name>UTP</name>
        <dbReference type="ChEBI" id="CHEBI:46398"/>
    </ligand>
</feature>
<feature type="binding site" evidence="1">
    <location>
        <begin position="14"/>
        <end position="19"/>
    </location>
    <ligand>
        <name>ATP</name>
        <dbReference type="ChEBI" id="CHEBI:30616"/>
    </ligand>
</feature>
<feature type="binding site" evidence="1">
    <location>
        <position position="54"/>
    </location>
    <ligand>
        <name>L-glutamine</name>
        <dbReference type="ChEBI" id="CHEBI:58359"/>
    </ligand>
</feature>
<feature type="binding site" evidence="1">
    <location>
        <position position="71"/>
    </location>
    <ligand>
        <name>ATP</name>
        <dbReference type="ChEBI" id="CHEBI:30616"/>
    </ligand>
</feature>
<feature type="binding site" evidence="1">
    <location>
        <position position="71"/>
    </location>
    <ligand>
        <name>Mg(2+)</name>
        <dbReference type="ChEBI" id="CHEBI:18420"/>
    </ligand>
</feature>
<feature type="binding site" evidence="1">
    <location>
        <position position="141"/>
    </location>
    <ligand>
        <name>Mg(2+)</name>
        <dbReference type="ChEBI" id="CHEBI:18420"/>
    </ligand>
</feature>
<feature type="binding site" evidence="1">
    <location>
        <begin position="148"/>
        <end position="150"/>
    </location>
    <ligand>
        <name>CTP</name>
        <dbReference type="ChEBI" id="CHEBI:37563"/>
        <note>allosteric inhibitor</note>
    </ligand>
</feature>
<feature type="binding site" evidence="1">
    <location>
        <begin position="188"/>
        <end position="193"/>
    </location>
    <ligand>
        <name>CTP</name>
        <dbReference type="ChEBI" id="CHEBI:37563"/>
        <note>allosteric inhibitor</note>
    </ligand>
</feature>
<feature type="binding site" evidence="1">
    <location>
        <begin position="188"/>
        <end position="193"/>
    </location>
    <ligand>
        <name>UTP</name>
        <dbReference type="ChEBI" id="CHEBI:46398"/>
    </ligand>
</feature>
<feature type="binding site" evidence="1">
    <location>
        <position position="224"/>
    </location>
    <ligand>
        <name>CTP</name>
        <dbReference type="ChEBI" id="CHEBI:37563"/>
        <note>allosteric inhibitor</note>
    </ligand>
</feature>
<feature type="binding site" evidence="1">
    <location>
        <position position="224"/>
    </location>
    <ligand>
        <name>UTP</name>
        <dbReference type="ChEBI" id="CHEBI:46398"/>
    </ligand>
</feature>
<feature type="binding site" evidence="1">
    <location>
        <position position="356"/>
    </location>
    <ligand>
        <name>L-glutamine</name>
        <dbReference type="ChEBI" id="CHEBI:58359"/>
    </ligand>
</feature>
<feature type="binding site" evidence="1">
    <location>
        <begin position="384"/>
        <end position="387"/>
    </location>
    <ligand>
        <name>L-glutamine</name>
        <dbReference type="ChEBI" id="CHEBI:58359"/>
    </ligand>
</feature>
<feature type="binding site" evidence="1">
    <location>
        <position position="407"/>
    </location>
    <ligand>
        <name>L-glutamine</name>
        <dbReference type="ChEBI" id="CHEBI:58359"/>
    </ligand>
</feature>
<feature type="binding site" evidence="1">
    <location>
        <position position="465"/>
    </location>
    <ligand>
        <name>L-glutamine</name>
        <dbReference type="ChEBI" id="CHEBI:58359"/>
    </ligand>
</feature>
<sequence length="539" mass="60779">MTKYIFVTGGVVSSLGKGITASSIGRLLKNRGLKVTMQKFDPYINIDPGTMNPYQHGEVFVTDDGTEADLDLGHYERLVDVRTSKYSNVTTGKIYQEVLQRERRGDYHGGTVQVIPHVTNMIKEKVMRAAQMTDTDVVISEIGGTVGDMESTPFMEAIRQMRREVGSENVMYVHVTFVPYLRAAKELKSKPTQQSVSMLRSIGIQPNMLVLRSEMPVPQEMKDKISTFTDVPVDYIVESLDAPSLFDVPLSYQEQGVDQKVVDFLHIDSPKPVADMDEWRRMDERAKNLKYKTKITLVGKYVELEDAYISVTDALHHAGYLYNSKIEVEKIQAEDITEDNVAELLKDTQGLIVPGGFGTRGLDGMITSIKYAREHDIPFLGICLGMQMASVEFARNVLHLEDANSAEAEPNCKNNIIDLMADQRDQEKIGGTLRLGLYPAMLKAGTKTRECYDGQEVIQERHRHRYEFNNKYREDFEKAGMTFSGISPDNHLVEIVEITDKKFFVAAQYHPEFLSRPNRPEGLFKGFIGAASGLQVDKF</sequence>